<comment type="function">
    <text evidence="8 9">May play a role in membrane trafficking.</text>
</comment>
<comment type="cofactor">
    <cofactor evidence="3">
        <name>Ca(2+)</name>
        <dbReference type="ChEBI" id="CHEBI:29108"/>
    </cofactor>
    <text evidence="1">Binds 3 Ca(2+) ions per subunit. The ions are bound to the C2 domains.</text>
</comment>
<comment type="subunit">
    <text evidence="9">Interacts with TCB2 via its C-terminal domain.</text>
</comment>
<comment type="subcellular location">
    <subcellularLocation>
        <location evidence="6 11">Cell membrane</location>
        <topology evidence="2">Multi-pass membrane protein</topology>
    </subcellularLocation>
    <subcellularLocation>
        <location evidence="10 11">Endoplasmic reticulum membrane</location>
        <topology evidence="2">Multi-pass membrane protein</topology>
    </subcellularLocation>
    <text evidence="10">More enriched in the cortical endoplasmic reticulum (ER) that is closely apposed to the cell membrane than in the perinuclear ER or internal ER tubules that connect the nucleus to the cortical ER.</text>
</comment>
<comment type="domain">
    <text>The C-terminal C2 domain shows Ca(2+)-dependent phospholipid binding. It binds to phosphatidylserine, phosphatidylinositol and various phosphoinositides. The other C2 domains do not retain all 5 conserved Asp residues found in calcium-binding C2 domains.</text>
</comment>
<comment type="miscellaneous">
    <text evidence="7">Present with 4280 molecules/cell in log phase SD medium.</text>
</comment>
<comment type="similarity">
    <text evidence="12">Belongs to the tricalbin family.</text>
</comment>
<evidence type="ECO:0000250" key="1"/>
<evidence type="ECO:0000255" key="2"/>
<evidence type="ECO:0000255" key="3">
    <source>
        <dbReference type="PROSITE-ProRule" id="PRU00041"/>
    </source>
</evidence>
<evidence type="ECO:0000255" key="4">
    <source>
        <dbReference type="PROSITE-ProRule" id="PRU01194"/>
    </source>
</evidence>
<evidence type="ECO:0000256" key="5">
    <source>
        <dbReference type="SAM" id="MobiDB-lite"/>
    </source>
</evidence>
<evidence type="ECO:0000269" key="6">
    <source>
    </source>
</evidence>
<evidence type="ECO:0000269" key="7">
    <source>
    </source>
</evidence>
<evidence type="ECO:0000269" key="8">
    <source>
    </source>
</evidence>
<evidence type="ECO:0000269" key="9">
    <source>
    </source>
</evidence>
<evidence type="ECO:0000269" key="10">
    <source>
    </source>
</evidence>
<evidence type="ECO:0000269" key="11">
    <source>
    </source>
</evidence>
<evidence type="ECO:0000305" key="12"/>
<evidence type="ECO:0007744" key="13">
    <source>
    </source>
</evidence>
<evidence type="ECO:0007744" key="14">
    <source>
    </source>
</evidence>
<evidence type="ECO:0007744" key="15">
    <source>
    </source>
</evidence>
<evidence type="ECO:0007744" key="16">
    <source>
    </source>
</evidence>
<organism>
    <name type="scientific">Saccharomyces cerevisiae (strain ATCC 204508 / S288c)</name>
    <name type="common">Baker's yeast</name>
    <dbReference type="NCBI Taxonomy" id="559292"/>
    <lineage>
        <taxon>Eukaryota</taxon>
        <taxon>Fungi</taxon>
        <taxon>Dikarya</taxon>
        <taxon>Ascomycota</taxon>
        <taxon>Saccharomycotina</taxon>
        <taxon>Saccharomycetes</taxon>
        <taxon>Saccharomycetales</taxon>
        <taxon>Saccharomycetaceae</taxon>
        <taxon>Saccharomyces</taxon>
    </lineage>
</organism>
<accession>Q03640</accession>
<accession>D6VZA1</accession>
<proteinExistence type="evidence at protein level"/>
<gene>
    <name type="primary">TCB3</name>
    <name type="ordered locus">YML072C</name>
</gene>
<name>TCB3_YEAST</name>
<sequence length="1545" mass="171076">MTGIKAQVHPPPDSTLFHEEEKKKVGGNLPQKVINQQERGSDHAPSGHHQYHQLINHDANDTKTSNSVSDVSKGQKTADSNPEGKKQSSKDIFVASSAQKTNQLPGPNPQGSIGAVPLEGLRPKEFRSAPSRKPNKFDTSITKPGVLDDLGKLDEKDIKEKFHLDSDDKLFPWQNVGEFHASGKGSPNTKMSRVIKAYILENFYNDWYCNIATVLGTCFFSWLFAYIGFSWWSMIFIFLGTATVYNAEYTRFNRNIRDDLKRVTVEETLSDRVESTTWLNSFLSKFWVIYMPVLSQQVKDNVNPQLAGVAPGYGIDALAIDEFTLGSKAPTIKGIKSYTKTGKNTVEMDWSFAFTPSDVSDMTATEAREKINPKISLGVTLGKSFVSKTMPILVEDINVAGKMRIKVEFGKAFPNIKIVSLQLLEPPLIDFALKPIGGDTLGLDVMSFLPGLKSFVKNIINSNIGPMLFPPNHLDINVEDIMAAQSKEAIGVLAVTIASADSLKGSDFITNTVDPYIVMTTEDAVPGTDEEVRTSIKSNVKNPRWNETKYLLLNTLEQKLNLKCFDFNDVRKDTVIGDLQLDLADLLQNPVLDNQTAELRSGTKSKGILHYSLHWFPVKEDKSEEKAVERAEAKAKGKKEDENEDTTEKEEDENEESSQTDVGIAKITLQKVKYLDTTSSMTGSLSPCAELFIDGQKVKSYRTLRRINEPSWNETIEVLVPSKSNSKFVLKIFDDRMNGKALICEYSSSLDDIMTTLDTAQEFVKGSPQGDIYLDVSWKSIEMTGAFAAANSVSEPIGCIKLDVKDAIIKGDLSGVGDVDPYYTVSLNRRVLYKSIYHSDTDHPIFDNSTYVPIFSPNQILTLEFHDYQKIGKDRFIGSVQIPTSNVFKKDPKSGKYVGNNGKEEISKLKLKDHEHKVTESIVNVSTTFIPINLVYSPEELVNVEKLEKELKEKKKKFEATQEENEQEMEKNPKEWEVAEIEDPFDSDEKKINRKAKLSLNELIKQKSGILSMQILEGTLSPSSAYLEILADDISYPVFICMKPSQGKLNSEMANIFIRDLNYSKLHFRVSKKHIAKDSDDVISETSYSTLKLLKQAYEEPMWLNFNGSKMKVRFLYTPTSVKLPSSESVEDTGYLNIKLISGHGLKSADRNGYSDPFVHIFVNDKKVFKSNIKKKTLDPVWNEDAKIPILSRSKNQVIFNVLDWDRAGDNDDLGQASLDVSSLEVGKTYNWNLNLNTQGSIKLQGSFNPEYIKPSFDIVKGGITDKPMKIASGAAHATVGIAGTGIGAATGVATGGLKKGGHLLKSLGGNPMKRSKSSNGNESNGAKKSSEKKSFDRRSPSNLNSTSVTPRASLDYDPSVPNTSYAPVQSASPVVKPTDNTSSSSNKKDTPSSNSRGHSRASSFARTLAPHGTYNGFITVVAAENVAKHVQIKISLTQGGRLKHIYKTKSQKANNDGVAVFDEECSFKASPEANLVLGAISHQRLSRDKDLGIAQINLGDPQIQQDGQISVKLGDGHLIVKINYGKDKNGQVPPVPEVPQEYTQ</sequence>
<keyword id="KW-0106">Calcium</keyword>
<keyword id="KW-0111">Calcium/phospholipid-binding</keyword>
<keyword id="KW-1003">Cell membrane</keyword>
<keyword id="KW-0175">Coiled coil</keyword>
<keyword id="KW-0256">Endoplasmic reticulum</keyword>
<keyword id="KW-0445">Lipid transport</keyword>
<keyword id="KW-0446">Lipid-binding</keyword>
<keyword id="KW-0472">Membrane</keyword>
<keyword id="KW-0479">Metal-binding</keyword>
<keyword id="KW-0597">Phosphoprotein</keyword>
<keyword id="KW-1185">Reference proteome</keyword>
<keyword id="KW-0677">Repeat</keyword>
<keyword id="KW-0812">Transmembrane</keyword>
<keyword id="KW-1133">Transmembrane helix</keyword>
<keyword id="KW-0813">Transport</keyword>
<protein>
    <recommendedName>
        <fullName>Tricalbin-3</fullName>
    </recommendedName>
</protein>
<feature type="chain" id="PRO_0000203249" description="Tricalbin-3">
    <location>
        <begin position="1"/>
        <end position="1545"/>
    </location>
</feature>
<feature type="topological domain" description="Cytoplasmic" evidence="1">
    <location>
        <begin position="1"/>
        <end position="206"/>
    </location>
</feature>
<feature type="transmembrane region" description="Helical" evidence="2">
    <location>
        <begin position="207"/>
        <end position="227"/>
    </location>
</feature>
<feature type="topological domain" description="Extracellular" evidence="1">
    <location>
        <position position="228"/>
    </location>
</feature>
<feature type="transmembrane region" description="Helical" evidence="2">
    <location>
        <begin position="229"/>
        <end position="249"/>
    </location>
</feature>
<feature type="topological domain" description="Cytoplasmic" evidence="1">
    <location>
        <begin position="250"/>
        <end position="1545"/>
    </location>
</feature>
<feature type="domain" description="SMP-LTD" evidence="4">
    <location>
        <begin position="272"/>
        <end position="479"/>
    </location>
</feature>
<feature type="domain" description="C2 1" evidence="3">
    <location>
        <begin position="470"/>
        <end position="596"/>
    </location>
</feature>
<feature type="domain" description="C2 2" evidence="3">
    <location>
        <begin position="646"/>
        <end position="763"/>
    </location>
</feature>
<feature type="domain" description="C2 3" evidence="3">
    <location>
        <begin position="783"/>
        <end position="897"/>
    </location>
</feature>
<feature type="domain" description="C2 4" evidence="3">
    <location>
        <begin position="1119"/>
        <end position="1234"/>
    </location>
</feature>
<feature type="domain" description="C2 5" evidence="3">
    <location>
        <begin position="1396"/>
        <end position="1514"/>
    </location>
</feature>
<feature type="region of interest" description="Disordered" evidence="5">
    <location>
        <begin position="1"/>
        <end position="89"/>
    </location>
</feature>
<feature type="region of interest" description="Disordered" evidence="5">
    <location>
        <begin position="624"/>
        <end position="660"/>
    </location>
</feature>
<feature type="region of interest" description="Disordered" evidence="5">
    <location>
        <begin position="1304"/>
        <end position="1404"/>
    </location>
</feature>
<feature type="coiled-coil region" evidence="2">
    <location>
        <begin position="620"/>
        <end position="660"/>
    </location>
</feature>
<feature type="coiled-coil region" evidence="2">
    <location>
        <begin position="937"/>
        <end position="972"/>
    </location>
</feature>
<feature type="compositionally biased region" description="Polar residues" evidence="5">
    <location>
        <begin position="62"/>
        <end position="80"/>
    </location>
</feature>
<feature type="compositionally biased region" description="Basic and acidic residues" evidence="5">
    <location>
        <begin position="624"/>
        <end position="641"/>
    </location>
</feature>
<feature type="compositionally biased region" description="Acidic residues" evidence="5">
    <location>
        <begin position="642"/>
        <end position="658"/>
    </location>
</feature>
<feature type="compositionally biased region" description="Polar residues" evidence="5">
    <location>
        <begin position="1318"/>
        <end position="1328"/>
    </location>
</feature>
<feature type="compositionally biased region" description="Basic and acidic residues" evidence="5">
    <location>
        <begin position="1329"/>
        <end position="1340"/>
    </location>
</feature>
<feature type="compositionally biased region" description="Polar residues" evidence="5">
    <location>
        <begin position="1341"/>
        <end position="1351"/>
    </location>
</feature>
<feature type="compositionally biased region" description="Polar residues" evidence="5">
    <location>
        <begin position="1361"/>
        <end position="1373"/>
    </location>
</feature>
<feature type="compositionally biased region" description="Low complexity" evidence="5">
    <location>
        <begin position="1377"/>
        <end position="1404"/>
    </location>
</feature>
<feature type="binding site" evidence="1">
    <location>
        <position position="1150"/>
    </location>
    <ligand>
        <name>Ca(2+)</name>
        <dbReference type="ChEBI" id="CHEBI:29108"/>
        <label>1</label>
    </ligand>
</feature>
<feature type="binding site" evidence="1">
    <location>
        <position position="1150"/>
    </location>
    <ligand>
        <name>Ca(2+)</name>
        <dbReference type="ChEBI" id="CHEBI:29108"/>
        <label>2</label>
    </ligand>
</feature>
<feature type="binding site" evidence="1">
    <location>
        <position position="1156"/>
    </location>
    <ligand>
        <name>Ca(2+)</name>
        <dbReference type="ChEBI" id="CHEBI:29108"/>
        <label>1</label>
    </ligand>
</feature>
<feature type="binding site" evidence="1">
    <location>
        <position position="1204"/>
    </location>
    <ligand>
        <name>Ca(2+)</name>
        <dbReference type="ChEBI" id="CHEBI:29108"/>
        <label>1</label>
    </ligand>
</feature>
<feature type="binding site" evidence="1">
    <location>
        <position position="1204"/>
    </location>
    <ligand>
        <name>Ca(2+)</name>
        <dbReference type="ChEBI" id="CHEBI:29108"/>
        <label>2</label>
    </ligand>
</feature>
<feature type="binding site" evidence="1">
    <location>
        <position position="1206"/>
    </location>
    <ligand>
        <name>Ca(2+)</name>
        <dbReference type="ChEBI" id="CHEBI:29108"/>
        <label>1</label>
    </ligand>
</feature>
<feature type="binding site" evidence="1">
    <location>
        <position position="1206"/>
    </location>
    <ligand>
        <name>Ca(2+)</name>
        <dbReference type="ChEBI" id="CHEBI:29108"/>
        <label>2</label>
    </ligand>
</feature>
<feature type="binding site" evidence="1">
    <location>
        <position position="1206"/>
    </location>
    <ligand>
        <name>Ca(2+)</name>
        <dbReference type="ChEBI" id="CHEBI:29108"/>
        <label>3</label>
    </ligand>
</feature>
<feature type="binding site" evidence="1">
    <location>
        <position position="1212"/>
    </location>
    <ligand>
        <name>Ca(2+)</name>
        <dbReference type="ChEBI" id="CHEBI:29108"/>
        <label>2</label>
    </ligand>
</feature>
<feature type="binding site" evidence="1">
    <location>
        <position position="1212"/>
    </location>
    <ligand>
        <name>Ca(2+)</name>
        <dbReference type="ChEBI" id="CHEBI:29108"/>
        <label>3</label>
    </ligand>
</feature>
<feature type="modified residue" description="Phosphoserine" evidence="15">
    <location>
        <position position="67"/>
    </location>
</feature>
<feature type="modified residue" description="Phosphoserine" evidence="15">
    <location>
        <position position="112"/>
    </location>
</feature>
<feature type="modified residue" description="Phosphoserine" evidence="16">
    <location>
        <position position="1340"/>
    </location>
</feature>
<feature type="modified residue" description="Phosphoserine" evidence="16">
    <location>
        <position position="1342"/>
    </location>
</feature>
<feature type="modified residue" description="Phosphoserine" evidence="16">
    <location>
        <position position="1346"/>
    </location>
</feature>
<feature type="modified residue" description="Phosphothreonine" evidence="13 14 15 16">
    <location>
        <position position="1350"/>
    </location>
</feature>
<feature type="modified residue" description="Phosphoserine" evidence="16">
    <location>
        <position position="1354"/>
    </location>
</feature>
<feature type="modified residue" description="Phosphoserine" evidence="16">
    <location>
        <position position="1400"/>
    </location>
</feature>
<dbReference type="EMBL" id="Z46373">
    <property type="protein sequence ID" value="CAA86506.1"/>
    <property type="molecule type" value="Genomic_DNA"/>
</dbReference>
<dbReference type="EMBL" id="BK006946">
    <property type="protein sequence ID" value="DAA09825.1"/>
    <property type="molecule type" value="Genomic_DNA"/>
</dbReference>
<dbReference type="PIR" id="S48824">
    <property type="entry name" value="S48824"/>
</dbReference>
<dbReference type="RefSeq" id="NP_013639.1">
    <property type="nucleotide sequence ID" value="NM_001182431.1"/>
</dbReference>
<dbReference type="SMR" id="Q03640"/>
<dbReference type="BioGRID" id="35069">
    <property type="interactions" value="381"/>
</dbReference>
<dbReference type="DIP" id="DIP-6589N"/>
<dbReference type="FunCoup" id="Q03640">
    <property type="interactions" value="142"/>
</dbReference>
<dbReference type="IntAct" id="Q03640">
    <property type="interactions" value="67"/>
</dbReference>
<dbReference type="MINT" id="Q03640"/>
<dbReference type="STRING" id="4932.YML072C"/>
<dbReference type="TCDB" id="9.A.57.1.12">
    <property type="family name" value="the extended-synaptotagmin (e-syt) family"/>
</dbReference>
<dbReference type="GlyGen" id="Q03640">
    <property type="glycosylation" value="1 site, 1 O-linked glycan (1 site)"/>
</dbReference>
<dbReference type="iPTMnet" id="Q03640"/>
<dbReference type="PaxDb" id="4932-YML072C"/>
<dbReference type="PeptideAtlas" id="Q03640"/>
<dbReference type="EnsemblFungi" id="YML072C_mRNA">
    <property type="protein sequence ID" value="YML072C"/>
    <property type="gene ID" value="YML072C"/>
</dbReference>
<dbReference type="GeneID" id="854903"/>
<dbReference type="KEGG" id="sce:YML072C"/>
<dbReference type="AGR" id="SGD:S000004537"/>
<dbReference type="SGD" id="S000004537">
    <property type="gene designation" value="TCB3"/>
</dbReference>
<dbReference type="VEuPathDB" id="FungiDB:YML072C"/>
<dbReference type="eggNOG" id="KOG1012">
    <property type="taxonomic scope" value="Eukaryota"/>
</dbReference>
<dbReference type="HOGENOM" id="CLU_001661_1_1_1"/>
<dbReference type="InParanoid" id="Q03640"/>
<dbReference type="OMA" id="DHFYGDW"/>
<dbReference type="OrthoDB" id="1029639at2759"/>
<dbReference type="BioCyc" id="YEAST:G3O-32666-MONOMER"/>
<dbReference type="BioGRID-ORCS" id="854903">
    <property type="hits" value="4 hits in 10 CRISPR screens"/>
</dbReference>
<dbReference type="PRO" id="PR:Q03640"/>
<dbReference type="Proteomes" id="UP000002311">
    <property type="component" value="Chromosome XIII"/>
</dbReference>
<dbReference type="RNAct" id="Q03640">
    <property type="molecule type" value="protein"/>
</dbReference>
<dbReference type="GO" id="GO:0005933">
    <property type="term" value="C:cellular bud"/>
    <property type="evidence" value="ECO:0000314"/>
    <property type="project" value="SGD"/>
</dbReference>
<dbReference type="GO" id="GO:0032541">
    <property type="term" value="C:cortical endoplasmic reticulum"/>
    <property type="evidence" value="ECO:0000314"/>
    <property type="project" value="SGD"/>
</dbReference>
<dbReference type="GO" id="GO:0005783">
    <property type="term" value="C:endoplasmic reticulum"/>
    <property type="evidence" value="ECO:0000318"/>
    <property type="project" value="GO_Central"/>
</dbReference>
<dbReference type="GO" id="GO:0005789">
    <property type="term" value="C:endoplasmic reticulum membrane"/>
    <property type="evidence" value="ECO:0007669"/>
    <property type="project" value="UniProtKB-SubCell"/>
</dbReference>
<dbReference type="GO" id="GO:0005739">
    <property type="term" value="C:mitochondrion"/>
    <property type="evidence" value="ECO:0007005"/>
    <property type="project" value="SGD"/>
</dbReference>
<dbReference type="GO" id="GO:0005886">
    <property type="term" value="C:plasma membrane"/>
    <property type="evidence" value="ECO:0000318"/>
    <property type="project" value="GO_Central"/>
</dbReference>
<dbReference type="GO" id="GO:0005544">
    <property type="term" value="F:calcium-dependent phospholipid binding"/>
    <property type="evidence" value="ECO:0007669"/>
    <property type="project" value="UniProtKB-KW"/>
</dbReference>
<dbReference type="GO" id="GO:0008289">
    <property type="term" value="F:lipid binding"/>
    <property type="evidence" value="ECO:0000314"/>
    <property type="project" value="SGD"/>
</dbReference>
<dbReference type="GO" id="GO:0046872">
    <property type="term" value="F:metal ion binding"/>
    <property type="evidence" value="ECO:0007669"/>
    <property type="project" value="UniProtKB-KW"/>
</dbReference>
<dbReference type="GO" id="GO:0005543">
    <property type="term" value="F:phospholipid binding"/>
    <property type="evidence" value="ECO:0000314"/>
    <property type="project" value="SGD"/>
</dbReference>
<dbReference type="GO" id="GO:0090158">
    <property type="term" value="P:endoplasmic reticulum membrane organization"/>
    <property type="evidence" value="ECO:0000316"/>
    <property type="project" value="SGD"/>
</dbReference>
<dbReference type="GO" id="GO:0061817">
    <property type="term" value="P:endoplasmic reticulum-plasma membrane tethering"/>
    <property type="evidence" value="ECO:0007669"/>
    <property type="project" value="InterPro"/>
</dbReference>
<dbReference type="GO" id="GO:0035621">
    <property type="term" value="P:ER to Golgi ceramide transport"/>
    <property type="evidence" value="ECO:0000315"/>
    <property type="project" value="SGD"/>
</dbReference>
<dbReference type="GO" id="GO:0120010">
    <property type="term" value="P:intermembrane phospholipid transfer"/>
    <property type="evidence" value="ECO:0000314"/>
    <property type="project" value="SGD"/>
</dbReference>
<dbReference type="GO" id="GO:0055091">
    <property type="term" value="P:phospholipid homeostasis"/>
    <property type="evidence" value="ECO:0000316"/>
    <property type="project" value="SGD"/>
</dbReference>
<dbReference type="GO" id="GO:0060304">
    <property type="term" value="P:regulation of phosphatidylinositol dephosphorylation"/>
    <property type="evidence" value="ECO:0000316"/>
    <property type="project" value="SGD"/>
</dbReference>
<dbReference type="CDD" id="cd04044">
    <property type="entry name" value="C2A_Tricalbin-like"/>
    <property type="match status" value="1"/>
</dbReference>
<dbReference type="CDD" id="cd04052">
    <property type="entry name" value="C2B_Tricalbin-like"/>
    <property type="match status" value="1"/>
</dbReference>
<dbReference type="CDD" id="cd04045">
    <property type="entry name" value="C2C_Tricalbin-like"/>
    <property type="match status" value="1"/>
</dbReference>
<dbReference type="CDD" id="cd04040">
    <property type="entry name" value="C2D_Tricalbin-like"/>
    <property type="match status" value="1"/>
</dbReference>
<dbReference type="CDD" id="cd21678">
    <property type="entry name" value="SMP_TCB"/>
    <property type="match status" value="1"/>
</dbReference>
<dbReference type="FunFam" id="2.60.40.150:FF:000301">
    <property type="entry name" value="Tcb3p"/>
    <property type="match status" value="1"/>
</dbReference>
<dbReference type="Gene3D" id="2.60.40.150">
    <property type="entry name" value="C2 domain"/>
    <property type="match status" value="4"/>
</dbReference>
<dbReference type="InterPro" id="IPR000008">
    <property type="entry name" value="C2_dom"/>
</dbReference>
<dbReference type="InterPro" id="IPR035892">
    <property type="entry name" value="C2_domain_sf"/>
</dbReference>
<dbReference type="InterPro" id="IPR037761">
    <property type="entry name" value="C2A_Tricalbin"/>
</dbReference>
<dbReference type="InterPro" id="IPR037765">
    <property type="entry name" value="C2B_Tricalbin"/>
</dbReference>
<dbReference type="InterPro" id="IPR037762">
    <property type="entry name" value="C2C_Tricalbin"/>
</dbReference>
<dbReference type="InterPro" id="IPR037756">
    <property type="entry name" value="C2D_Tricalbin"/>
</dbReference>
<dbReference type="InterPro" id="IPR031468">
    <property type="entry name" value="SMP_LBD"/>
</dbReference>
<dbReference type="InterPro" id="IPR056910">
    <property type="entry name" value="TCB1-3_C2"/>
</dbReference>
<dbReference type="InterPro" id="IPR017147">
    <property type="entry name" value="Tricalbin"/>
</dbReference>
<dbReference type="InterPro" id="IPR052455">
    <property type="entry name" value="Tricalbin_domain"/>
</dbReference>
<dbReference type="PANTHER" id="PTHR46980">
    <property type="entry name" value="TRICALBIN-1-RELATED"/>
    <property type="match status" value="1"/>
</dbReference>
<dbReference type="PANTHER" id="PTHR46980:SF1">
    <property type="entry name" value="TRICALBIN-3"/>
    <property type="match status" value="1"/>
</dbReference>
<dbReference type="Pfam" id="PF00168">
    <property type="entry name" value="C2"/>
    <property type="match status" value="5"/>
</dbReference>
<dbReference type="Pfam" id="PF24920">
    <property type="entry name" value="C2_TCB1"/>
    <property type="match status" value="1"/>
</dbReference>
<dbReference type="PIRSF" id="PIRSF037232">
    <property type="entry name" value="Tricalbin"/>
    <property type="match status" value="1"/>
</dbReference>
<dbReference type="SMART" id="SM00239">
    <property type="entry name" value="C2"/>
    <property type="match status" value="5"/>
</dbReference>
<dbReference type="SUPFAM" id="SSF49562">
    <property type="entry name" value="C2 domain (Calcium/lipid-binding domain, CaLB)"/>
    <property type="match status" value="5"/>
</dbReference>
<dbReference type="PROSITE" id="PS50004">
    <property type="entry name" value="C2"/>
    <property type="match status" value="5"/>
</dbReference>
<dbReference type="PROSITE" id="PS51847">
    <property type="entry name" value="SMP"/>
    <property type="match status" value="1"/>
</dbReference>
<reference key="1">
    <citation type="journal article" date="1997" name="Nature">
        <title>The nucleotide sequence of Saccharomyces cerevisiae chromosome XIII.</title>
        <authorList>
            <person name="Bowman S."/>
            <person name="Churcher C.M."/>
            <person name="Badcock K."/>
            <person name="Brown D."/>
            <person name="Chillingworth T."/>
            <person name="Connor R."/>
            <person name="Dedman K."/>
            <person name="Devlin K."/>
            <person name="Gentles S."/>
            <person name="Hamlin N."/>
            <person name="Hunt S."/>
            <person name="Jagels K."/>
            <person name="Lye G."/>
            <person name="Moule S."/>
            <person name="Odell C."/>
            <person name="Pearson D."/>
            <person name="Rajandream M.A."/>
            <person name="Rice P."/>
            <person name="Skelton J."/>
            <person name="Walsh S.V."/>
            <person name="Whitehead S."/>
            <person name="Barrell B.G."/>
        </authorList>
    </citation>
    <scope>NUCLEOTIDE SEQUENCE [LARGE SCALE GENOMIC DNA]</scope>
    <source>
        <strain>ATCC 204508 / S288c</strain>
    </source>
</reference>
<reference key="2">
    <citation type="journal article" date="2014" name="G3 (Bethesda)">
        <title>The reference genome sequence of Saccharomyces cerevisiae: Then and now.</title>
        <authorList>
            <person name="Engel S.R."/>
            <person name="Dietrich F.S."/>
            <person name="Fisk D.G."/>
            <person name="Binkley G."/>
            <person name="Balakrishnan R."/>
            <person name="Costanzo M.C."/>
            <person name="Dwight S.S."/>
            <person name="Hitz B.C."/>
            <person name="Karra K."/>
            <person name="Nash R.S."/>
            <person name="Weng S."/>
            <person name="Wong E.D."/>
            <person name="Lloyd P."/>
            <person name="Skrzypek M.S."/>
            <person name="Miyasato S.R."/>
            <person name="Simison M."/>
            <person name="Cherry J.M."/>
        </authorList>
    </citation>
    <scope>GENOME REANNOTATION</scope>
    <source>
        <strain>ATCC 204508 / S288c</strain>
    </source>
</reference>
<reference key="3">
    <citation type="journal article" date="2003" name="Nature">
        <title>Global analysis of protein localization in budding yeast.</title>
        <authorList>
            <person name="Huh W.-K."/>
            <person name="Falvo J.V."/>
            <person name="Gerke L.C."/>
            <person name="Carroll A.S."/>
            <person name="Howson R.W."/>
            <person name="Weissman J.S."/>
            <person name="O'Shea E.K."/>
        </authorList>
    </citation>
    <scope>SUBCELLULAR LOCATION [LARGE SCALE ANALYSIS]</scope>
</reference>
<reference key="4">
    <citation type="journal article" date="2003" name="Nature">
        <title>Global analysis of protein expression in yeast.</title>
        <authorList>
            <person name="Ghaemmaghami S."/>
            <person name="Huh W.-K."/>
            <person name="Bower K."/>
            <person name="Howson R.W."/>
            <person name="Belle A."/>
            <person name="Dephoure N."/>
            <person name="O'Shea E.K."/>
            <person name="Weissman J.S."/>
        </authorList>
    </citation>
    <scope>LEVEL OF PROTEIN EXPRESSION [LARGE SCALE ANALYSIS]</scope>
</reference>
<reference key="5">
    <citation type="journal article" date="2004" name="Biochemistry">
        <title>The tricalbin C2 domains: lipid-binding properties of a novel, synaptotagmin-like yeast protein family.</title>
        <authorList>
            <person name="Schulz T.A."/>
            <person name="Creutz C.E."/>
        </authorList>
    </citation>
    <scope>FUNCTION</scope>
    <scope>CALCIUM-DEPENDENT BINDING TO PHOSPHOLIPIDS</scope>
</reference>
<reference key="6">
    <citation type="journal article" date="2004" name="Cell. Mol. Life Sci.">
        <title>Characterization of the yeast tricalbins: membrane-bound multi-C2-domain proteins that form complexes involved in membrane trafficking.</title>
        <authorList>
            <person name="Creutz C.E."/>
            <person name="Snyder S.L."/>
            <person name="Schulz T.A."/>
        </authorList>
    </citation>
    <scope>FUNCTION</scope>
    <scope>INTERACTION WITH TCB2</scope>
</reference>
<reference key="7">
    <citation type="journal article" date="2007" name="J. Proteome Res.">
        <title>Large-scale phosphorylation analysis of alpha-factor-arrested Saccharomyces cerevisiae.</title>
        <authorList>
            <person name="Li X."/>
            <person name="Gerber S.A."/>
            <person name="Rudner A.D."/>
            <person name="Beausoleil S.A."/>
            <person name="Haas W."/>
            <person name="Villen J."/>
            <person name="Elias J.E."/>
            <person name="Gygi S.P."/>
        </authorList>
    </citation>
    <scope>PHOSPHORYLATION [LARGE SCALE ANALYSIS] AT THR-1350</scope>
    <scope>IDENTIFICATION BY MASS SPECTROMETRY [LARGE SCALE ANALYSIS]</scope>
    <source>
        <strain>ADR376</strain>
    </source>
</reference>
<reference key="8">
    <citation type="journal article" date="2007" name="Mol. Cell. Proteomics">
        <title>Profiling phosphoproteins of yeast mitochondria reveals a role of phosphorylation in assembly of the ATP synthase.</title>
        <authorList>
            <person name="Reinders J."/>
            <person name="Wagner K."/>
            <person name="Zahedi R.P."/>
            <person name="Stojanovski D."/>
            <person name="Eyrich B."/>
            <person name="van der Laan M."/>
            <person name="Rehling P."/>
            <person name="Sickmann A."/>
            <person name="Pfanner N."/>
            <person name="Meisinger C."/>
        </authorList>
    </citation>
    <scope>PHOSPHORYLATION [LARGE SCALE ANALYSIS] AT THR-1350</scope>
    <scope>IDENTIFICATION BY MASS SPECTROMETRY [LARGE SCALE ANALYSIS]</scope>
    <source>
        <strain>ATCC 76625 / YPH499</strain>
    </source>
</reference>
<reference key="9">
    <citation type="journal article" date="2008" name="Mol. Cell. Proteomics">
        <title>A multidimensional chromatography technology for in-depth phosphoproteome analysis.</title>
        <authorList>
            <person name="Albuquerque C.P."/>
            <person name="Smolka M.B."/>
            <person name="Payne S.H."/>
            <person name="Bafna V."/>
            <person name="Eng J."/>
            <person name="Zhou H."/>
        </authorList>
    </citation>
    <scope>PHOSPHORYLATION [LARGE SCALE ANALYSIS] AT SER-67; SER-112 AND THR-1350</scope>
    <scope>IDENTIFICATION BY MASS SPECTROMETRY [LARGE SCALE ANALYSIS]</scope>
</reference>
<reference key="10">
    <citation type="journal article" date="2009" name="Science">
        <title>Global analysis of Cdk1 substrate phosphorylation sites provides insights into evolution.</title>
        <authorList>
            <person name="Holt L.J."/>
            <person name="Tuch B.B."/>
            <person name="Villen J."/>
            <person name="Johnson A.D."/>
            <person name="Gygi S.P."/>
            <person name="Morgan D.O."/>
        </authorList>
    </citation>
    <scope>PHOSPHORYLATION [LARGE SCALE ANALYSIS] AT SER-1340; SER-1342; SER-1346; THR-1350; SER-1354 AND SER-1400</scope>
    <scope>IDENTIFICATION BY MASS SPECTROMETRY [LARGE SCALE ANALYSIS]</scope>
</reference>
<reference key="11">
    <citation type="journal article" date="2012" name="J. Cell Sci.">
        <title>A conserved membrane-binding domain targets proteins to organelle contact sites.</title>
        <authorList>
            <person name="Toulmay A."/>
            <person name="Prinz W.A."/>
        </authorList>
    </citation>
    <scope>SUBCELLULAR LOCATION</scope>
</reference>
<reference key="12">
    <citation type="journal article" date="2022" name="J. Cell Biol.">
        <title>Vps13-like proteins provide phosphatidylethanolamine for GPI anchor synthesis in the ER.</title>
        <authorList>
            <person name="Toulmay A."/>
            <person name="Whittle F.B."/>
            <person name="Yang J."/>
            <person name="Bai X."/>
            <person name="Diarra J."/>
            <person name="Banerjee S."/>
            <person name="Levine T.P."/>
            <person name="Golden A."/>
            <person name="Prinz W.A."/>
        </authorList>
    </citation>
    <scope>SUBCELLULAR LOCATION</scope>
</reference>